<keyword id="KW-0067">ATP-binding</keyword>
<keyword id="KW-0963">Cytoplasm</keyword>
<keyword id="KW-0436">Ligase</keyword>
<keyword id="KW-0547">Nucleotide-binding</keyword>
<keyword id="KW-1185">Reference proteome</keyword>
<keyword id="KW-0819">tRNA processing</keyword>
<organism>
    <name type="scientific">Corynebacterium efficiens (strain DSM 44549 / YS-314 / AJ 12310 / JCM 11189 / NBRC 100395)</name>
    <dbReference type="NCBI Taxonomy" id="196164"/>
    <lineage>
        <taxon>Bacteria</taxon>
        <taxon>Bacillati</taxon>
        <taxon>Actinomycetota</taxon>
        <taxon>Actinomycetes</taxon>
        <taxon>Mycobacteriales</taxon>
        <taxon>Corynebacteriaceae</taxon>
        <taxon>Corynebacterium</taxon>
    </lineage>
</organism>
<feature type="chain" id="PRO_0000181683" description="tRNA(Ile)-lysidine synthase">
    <location>
        <begin position="1"/>
        <end position="313"/>
    </location>
</feature>
<feature type="binding site" evidence="1">
    <location>
        <begin position="37"/>
        <end position="42"/>
    </location>
    <ligand>
        <name>ATP</name>
        <dbReference type="ChEBI" id="CHEBI:30616"/>
    </ligand>
</feature>
<gene>
    <name evidence="1" type="primary">tilS</name>
    <name type="ordered locus">CE2544</name>
</gene>
<evidence type="ECO:0000255" key="1">
    <source>
        <dbReference type="HAMAP-Rule" id="MF_01161"/>
    </source>
</evidence>
<reference key="1">
    <citation type="journal article" date="2003" name="Genome Res.">
        <title>Comparative complete genome sequence analysis of the amino acid replacements responsible for the thermostability of Corynebacterium efficiens.</title>
        <authorList>
            <person name="Nishio Y."/>
            <person name="Nakamura Y."/>
            <person name="Kawarabayasi Y."/>
            <person name="Usuda Y."/>
            <person name="Kimura E."/>
            <person name="Sugimoto S."/>
            <person name="Matsui K."/>
            <person name="Yamagishi A."/>
            <person name="Kikuchi H."/>
            <person name="Ikeo K."/>
            <person name="Gojobori T."/>
        </authorList>
    </citation>
    <scope>NUCLEOTIDE SEQUENCE [LARGE SCALE GENOMIC DNA]</scope>
    <source>
        <strain>DSM 44549 / YS-314 / AJ 12310 / JCM 11189 / NBRC 100395</strain>
    </source>
</reference>
<proteinExistence type="inferred from homology"/>
<sequence length="313" mass="33517">MPASIGGLPLPRICPHFLTLRVAIRAHLTDHVHIGLSGGPDSLALVAAARAEGAEVTAICINHNLQEGSAEVSERAAAQAEHMGATALIRSITVPPGSMEAQAREARYAEFAQLTDTIWAGHTMDDQAETFLLAGLRGNPAGMKSASRRPDLTVIRPLLGVRRADTHGACTELGLTPWQDPQNRDRAFRRVAIREQVLPLLAEIHAGDPVPGLALAATRAAMEGEALEFFVDKRRGEWADGFPVRLAAEPHALRRLMLADFLRGHGVRVTSKKIEAVDRLLTHWHGQGGVAVGGGAHGRLEVVRVSGKLEITG</sequence>
<protein>
    <recommendedName>
        <fullName evidence="1">tRNA(Ile)-lysidine synthase</fullName>
        <ecNumber evidence="1">6.3.4.19</ecNumber>
    </recommendedName>
    <alternativeName>
        <fullName evidence="1">tRNA(Ile)-2-lysyl-cytidine synthase</fullName>
    </alternativeName>
    <alternativeName>
        <fullName evidence="1">tRNA(Ile)-lysidine synthetase</fullName>
    </alternativeName>
</protein>
<comment type="function">
    <text evidence="1">Ligates lysine onto the cytidine present at position 34 of the AUA codon-specific tRNA(Ile) that contains the anticodon CAU, in an ATP-dependent manner. Cytidine is converted to lysidine, thus changing the amino acid specificity of the tRNA from methionine to isoleucine.</text>
</comment>
<comment type="catalytic activity">
    <reaction evidence="1">
        <text>cytidine(34) in tRNA(Ile2) + L-lysine + ATP = lysidine(34) in tRNA(Ile2) + AMP + diphosphate + H(+)</text>
        <dbReference type="Rhea" id="RHEA:43744"/>
        <dbReference type="Rhea" id="RHEA-COMP:10625"/>
        <dbReference type="Rhea" id="RHEA-COMP:10670"/>
        <dbReference type="ChEBI" id="CHEBI:15378"/>
        <dbReference type="ChEBI" id="CHEBI:30616"/>
        <dbReference type="ChEBI" id="CHEBI:32551"/>
        <dbReference type="ChEBI" id="CHEBI:33019"/>
        <dbReference type="ChEBI" id="CHEBI:82748"/>
        <dbReference type="ChEBI" id="CHEBI:83665"/>
        <dbReference type="ChEBI" id="CHEBI:456215"/>
        <dbReference type="EC" id="6.3.4.19"/>
    </reaction>
</comment>
<comment type="subcellular location">
    <subcellularLocation>
        <location evidence="1">Cytoplasm</location>
    </subcellularLocation>
</comment>
<comment type="domain">
    <text>The N-terminal region contains the highly conserved SGGXDS motif, predicted to be a P-loop motif involved in ATP binding.</text>
</comment>
<comment type="similarity">
    <text evidence="1">Belongs to the tRNA(Ile)-lysidine synthase family.</text>
</comment>
<name>TILS_COREF</name>
<accession>Q8FMG0</accession>
<dbReference type="EC" id="6.3.4.19" evidence="1"/>
<dbReference type="EMBL" id="BA000035">
    <property type="protein sequence ID" value="BAC19354.1"/>
    <property type="molecule type" value="Genomic_DNA"/>
</dbReference>
<dbReference type="RefSeq" id="WP_006769091.1">
    <property type="nucleotide sequence ID" value="NC_004369.1"/>
</dbReference>
<dbReference type="SMR" id="Q8FMG0"/>
<dbReference type="STRING" id="196164.gene:10742991"/>
<dbReference type="KEGG" id="cef:CE2544"/>
<dbReference type="eggNOG" id="COG0037">
    <property type="taxonomic scope" value="Bacteria"/>
</dbReference>
<dbReference type="HOGENOM" id="CLU_018869_1_1_11"/>
<dbReference type="OrthoDB" id="5244702at2"/>
<dbReference type="Proteomes" id="UP000001409">
    <property type="component" value="Chromosome"/>
</dbReference>
<dbReference type="GO" id="GO:0005737">
    <property type="term" value="C:cytoplasm"/>
    <property type="evidence" value="ECO:0007669"/>
    <property type="project" value="UniProtKB-SubCell"/>
</dbReference>
<dbReference type="GO" id="GO:0005524">
    <property type="term" value="F:ATP binding"/>
    <property type="evidence" value="ECO:0007669"/>
    <property type="project" value="UniProtKB-UniRule"/>
</dbReference>
<dbReference type="GO" id="GO:0032267">
    <property type="term" value="F:tRNA(Ile)-lysidine synthase activity"/>
    <property type="evidence" value="ECO:0007669"/>
    <property type="project" value="UniProtKB-EC"/>
</dbReference>
<dbReference type="GO" id="GO:0006400">
    <property type="term" value="P:tRNA modification"/>
    <property type="evidence" value="ECO:0007669"/>
    <property type="project" value="UniProtKB-UniRule"/>
</dbReference>
<dbReference type="CDD" id="cd01992">
    <property type="entry name" value="TilS_N"/>
    <property type="match status" value="1"/>
</dbReference>
<dbReference type="Gene3D" id="3.40.50.620">
    <property type="entry name" value="HUPs"/>
    <property type="match status" value="1"/>
</dbReference>
<dbReference type="HAMAP" id="MF_01161">
    <property type="entry name" value="tRNA_Ile_lys_synt"/>
    <property type="match status" value="1"/>
</dbReference>
<dbReference type="InterPro" id="IPR014729">
    <property type="entry name" value="Rossmann-like_a/b/a_fold"/>
</dbReference>
<dbReference type="InterPro" id="IPR011063">
    <property type="entry name" value="TilS/TtcA_N"/>
</dbReference>
<dbReference type="InterPro" id="IPR012094">
    <property type="entry name" value="tRNA_Ile_lys_synt"/>
</dbReference>
<dbReference type="InterPro" id="IPR012795">
    <property type="entry name" value="tRNA_Ile_lys_synt_N"/>
</dbReference>
<dbReference type="InterPro" id="IPR015262">
    <property type="entry name" value="tRNA_Ile_lys_synt_subst-bd"/>
</dbReference>
<dbReference type="NCBIfam" id="TIGR02432">
    <property type="entry name" value="lysidine_TilS_N"/>
    <property type="match status" value="1"/>
</dbReference>
<dbReference type="PANTHER" id="PTHR43033">
    <property type="entry name" value="TRNA(ILE)-LYSIDINE SYNTHASE-RELATED"/>
    <property type="match status" value="1"/>
</dbReference>
<dbReference type="PANTHER" id="PTHR43033:SF1">
    <property type="entry name" value="TRNA(ILE)-LYSIDINE SYNTHASE-RELATED"/>
    <property type="match status" value="1"/>
</dbReference>
<dbReference type="Pfam" id="PF01171">
    <property type="entry name" value="ATP_bind_3"/>
    <property type="match status" value="1"/>
</dbReference>
<dbReference type="Pfam" id="PF09179">
    <property type="entry name" value="TilS"/>
    <property type="match status" value="1"/>
</dbReference>
<dbReference type="SUPFAM" id="SSF52402">
    <property type="entry name" value="Adenine nucleotide alpha hydrolases-like"/>
    <property type="match status" value="1"/>
</dbReference>